<evidence type="ECO:0000255" key="1">
    <source>
        <dbReference type="HAMAP-Rule" id="MF_00098"/>
    </source>
</evidence>
<comment type="function">
    <text evidence="1">Is required not only for elongation of protein synthesis but also for the initiation of all mRNA translation through initiator tRNA(fMet) aminoacylation.</text>
</comment>
<comment type="catalytic activity">
    <reaction evidence="1">
        <text>tRNA(Met) + L-methionine + ATP = L-methionyl-tRNA(Met) + AMP + diphosphate</text>
        <dbReference type="Rhea" id="RHEA:13481"/>
        <dbReference type="Rhea" id="RHEA-COMP:9667"/>
        <dbReference type="Rhea" id="RHEA-COMP:9698"/>
        <dbReference type="ChEBI" id="CHEBI:30616"/>
        <dbReference type="ChEBI" id="CHEBI:33019"/>
        <dbReference type="ChEBI" id="CHEBI:57844"/>
        <dbReference type="ChEBI" id="CHEBI:78442"/>
        <dbReference type="ChEBI" id="CHEBI:78530"/>
        <dbReference type="ChEBI" id="CHEBI:456215"/>
        <dbReference type="EC" id="6.1.1.10"/>
    </reaction>
</comment>
<comment type="cofactor">
    <cofactor evidence="1">
        <name>Zn(2+)</name>
        <dbReference type="ChEBI" id="CHEBI:29105"/>
    </cofactor>
    <text evidence="1">Binds 1 zinc ion per subunit.</text>
</comment>
<comment type="subunit">
    <text evidence="1">Homodimer.</text>
</comment>
<comment type="subcellular location">
    <subcellularLocation>
        <location evidence="1">Cytoplasm</location>
    </subcellularLocation>
</comment>
<comment type="similarity">
    <text evidence="1">Belongs to the class-I aminoacyl-tRNA synthetase family. MetG type 1 subfamily.</text>
</comment>
<protein>
    <recommendedName>
        <fullName evidence="1">Methionine--tRNA ligase</fullName>
        <ecNumber evidence="1">6.1.1.10</ecNumber>
    </recommendedName>
    <alternativeName>
        <fullName evidence="1">Methionyl-tRNA synthetase</fullName>
        <shortName evidence="1">MetRS</shortName>
    </alternativeName>
</protein>
<gene>
    <name evidence="1" type="primary">metG</name>
    <name type="ordered locus">Sputw3181_1789</name>
</gene>
<sequence>MATSQRKILVTSALPYANGPIHLGHMLEYIQTDIWSRYQKLRGHECHYICADDAHGTPIMLKAQQLGLAPEEMIAQVNKEHQQDFADFNIAFDNYHSTHSDENRVLASDIYLKLRTNGYIKSKSISQLFDPEKSMFLPDRFVKGTCPKCKSPDQYGDNCDACGATYSPTELINPKSAVSGATPVMKDTEHFFFDLPAFEGMLKEWTRSGALQTEMANKLDEWFEQGLQQWDITRDAPYFGFEIPDAPGKYFYVWLDAPIGYMGSFKNLCDKRPELSFDEFWAKDSKAEVYHFIGKDIVYFHSLFWPAMLHGSGYRQPNSVYAHGYVTVNGAKMSKSKGTFIKARTYLDHLDPEYLRYYYAAKLSSRIDDLDLNLEDFAQRVNSDLVGKLVNLASRTAGFITKRFDGKLAKIADTTLTEAFLAKQEQIAEFYETREYGKAMREIMALADIANGFVADAAPWQMVKQDDQQEAAHQVCSNALNLFRILVTYLKPVLPRLAQDVEAFFQQTLTWDGLAQDMAGHEISPFKAMMQRVELDKVNAMVADSKENLQVTADVPKTAKPEKTVESSNVSSEPLVDDPISETINFDDFAKIDLRIARIVKAEHVAEADKLLKLQLDIGGETRQVFAGIKSAYSPEDLEGKLTVMVANLAPRKMRFGMSEGMVLAAGPGGSDLWILEPHEGAQPGMRVK</sequence>
<keyword id="KW-0030">Aminoacyl-tRNA synthetase</keyword>
<keyword id="KW-0067">ATP-binding</keyword>
<keyword id="KW-0963">Cytoplasm</keyword>
<keyword id="KW-0436">Ligase</keyword>
<keyword id="KW-0479">Metal-binding</keyword>
<keyword id="KW-0547">Nucleotide-binding</keyword>
<keyword id="KW-0648">Protein biosynthesis</keyword>
<keyword id="KW-0694">RNA-binding</keyword>
<keyword id="KW-0820">tRNA-binding</keyword>
<keyword id="KW-0862">Zinc</keyword>
<reference key="1">
    <citation type="submission" date="2006-12" db="EMBL/GenBank/DDBJ databases">
        <title>Complete sequence of Shewanella sp. W3-18-1.</title>
        <authorList>
            <consortium name="US DOE Joint Genome Institute"/>
            <person name="Copeland A."/>
            <person name="Lucas S."/>
            <person name="Lapidus A."/>
            <person name="Barry K."/>
            <person name="Detter J.C."/>
            <person name="Glavina del Rio T."/>
            <person name="Hammon N."/>
            <person name="Israni S."/>
            <person name="Dalin E."/>
            <person name="Tice H."/>
            <person name="Pitluck S."/>
            <person name="Chain P."/>
            <person name="Malfatti S."/>
            <person name="Shin M."/>
            <person name="Vergez L."/>
            <person name="Schmutz J."/>
            <person name="Larimer F."/>
            <person name="Land M."/>
            <person name="Hauser L."/>
            <person name="Kyrpides N."/>
            <person name="Lykidis A."/>
            <person name="Tiedje J."/>
            <person name="Richardson P."/>
        </authorList>
    </citation>
    <scope>NUCLEOTIDE SEQUENCE [LARGE SCALE GENOMIC DNA]</scope>
    <source>
        <strain>W3-18-1</strain>
    </source>
</reference>
<organism>
    <name type="scientific">Shewanella sp. (strain W3-18-1)</name>
    <dbReference type="NCBI Taxonomy" id="351745"/>
    <lineage>
        <taxon>Bacteria</taxon>
        <taxon>Pseudomonadati</taxon>
        <taxon>Pseudomonadota</taxon>
        <taxon>Gammaproteobacteria</taxon>
        <taxon>Alteromonadales</taxon>
        <taxon>Shewanellaceae</taxon>
        <taxon>Shewanella</taxon>
    </lineage>
</organism>
<accession>A1RIY0</accession>
<proteinExistence type="inferred from homology"/>
<name>SYM_SHESW</name>
<dbReference type="EC" id="6.1.1.10" evidence="1"/>
<dbReference type="EMBL" id="CP000503">
    <property type="protein sequence ID" value="ABM24625.1"/>
    <property type="molecule type" value="Genomic_DNA"/>
</dbReference>
<dbReference type="RefSeq" id="WP_011789121.1">
    <property type="nucleotide sequence ID" value="NC_008750.1"/>
</dbReference>
<dbReference type="SMR" id="A1RIY0"/>
<dbReference type="KEGG" id="shw:Sputw3181_1789"/>
<dbReference type="HOGENOM" id="CLU_009710_7_0_6"/>
<dbReference type="Proteomes" id="UP000002597">
    <property type="component" value="Chromosome"/>
</dbReference>
<dbReference type="GO" id="GO:0005829">
    <property type="term" value="C:cytosol"/>
    <property type="evidence" value="ECO:0007669"/>
    <property type="project" value="TreeGrafter"/>
</dbReference>
<dbReference type="GO" id="GO:0005524">
    <property type="term" value="F:ATP binding"/>
    <property type="evidence" value="ECO:0007669"/>
    <property type="project" value="UniProtKB-UniRule"/>
</dbReference>
<dbReference type="GO" id="GO:0046872">
    <property type="term" value="F:metal ion binding"/>
    <property type="evidence" value="ECO:0007669"/>
    <property type="project" value="UniProtKB-KW"/>
</dbReference>
<dbReference type="GO" id="GO:0004825">
    <property type="term" value="F:methionine-tRNA ligase activity"/>
    <property type="evidence" value="ECO:0007669"/>
    <property type="project" value="UniProtKB-UniRule"/>
</dbReference>
<dbReference type="GO" id="GO:0000049">
    <property type="term" value="F:tRNA binding"/>
    <property type="evidence" value="ECO:0007669"/>
    <property type="project" value="UniProtKB-KW"/>
</dbReference>
<dbReference type="GO" id="GO:0006431">
    <property type="term" value="P:methionyl-tRNA aminoacylation"/>
    <property type="evidence" value="ECO:0007669"/>
    <property type="project" value="UniProtKB-UniRule"/>
</dbReference>
<dbReference type="CDD" id="cd07957">
    <property type="entry name" value="Anticodon_Ia_Met"/>
    <property type="match status" value="1"/>
</dbReference>
<dbReference type="CDD" id="cd00814">
    <property type="entry name" value="MetRS_core"/>
    <property type="match status" value="1"/>
</dbReference>
<dbReference type="CDD" id="cd02800">
    <property type="entry name" value="tRNA_bind_EcMetRS_like"/>
    <property type="match status" value="1"/>
</dbReference>
<dbReference type="FunFam" id="1.10.730.10:FF:000005">
    <property type="entry name" value="Methionine--tRNA ligase"/>
    <property type="match status" value="1"/>
</dbReference>
<dbReference type="FunFam" id="2.20.28.20:FF:000001">
    <property type="entry name" value="Methionine--tRNA ligase"/>
    <property type="match status" value="1"/>
</dbReference>
<dbReference type="FunFam" id="2.40.50.140:FF:000042">
    <property type="entry name" value="Methionine--tRNA ligase"/>
    <property type="match status" value="1"/>
</dbReference>
<dbReference type="Gene3D" id="3.40.50.620">
    <property type="entry name" value="HUPs"/>
    <property type="match status" value="1"/>
</dbReference>
<dbReference type="Gene3D" id="1.10.730.10">
    <property type="entry name" value="Isoleucyl-tRNA Synthetase, Domain 1"/>
    <property type="match status" value="1"/>
</dbReference>
<dbReference type="Gene3D" id="2.20.28.20">
    <property type="entry name" value="Methionyl-tRNA synthetase, Zn-domain"/>
    <property type="match status" value="1"/>
</dbReference>
<dbReference type="Gene3D" id="2.40.50.140">
    <property type="entry name" value="Nucleic acid-binding proteins"/>
    <property type="match status" value="1"/>
</dbReference>
<dbReference type="HAMAP" id="MF_00098">
    <property type="entry name" value="Met_tRNA_synth_type1"/>
    <property type="match status" value="1"/>
</dbReference>
<dbReference type="InterPro" id="IPR001412">
    <property type="entry name" value="aa-tRNA-synth_I_CS"/>
</dbReference>
<dbReference type="InterPro" id="IPR041872">
    <property type="entry name" value="Anticodon_Met"/>
</dbReference>
<dbReference type="InterPro" id="IPR004495">
    <property type="entry name" value="Met-tRNA-synth_bsu_C"/>
</dbReference>
<dbReference type="InterPro" id="IPR023458">
    <property type="entry name" value="Met-tRNA_ligase_1"/>
</dbReference>
<dbReference type="InterPro" id="IPR014758">
    <property type="entry name" value="Met-tRNA_synth"/>
</dbReference>
<dbReference type="InterPro" id="IPR015413">
    <property type="entry name" value="Methionyl/Leucyl_tRNA_Synth"/>
</dbReference>
<dbReference type="InterPro" id="IPR033911">
    <property type="entry name" value="MetRS_core"/>
</dbReference>
<dbReference type="InterPro" id="IPR029038">
    <property type="entry name" value="MetRS_Zn"/>
</dbReference>
<dbReference type="InterPro" id="IPR012340">
    <property type="entry name" value="NA-bd_OB-fold"/>
</dbReference>
<dbReference type="InterPro" id="IPR014729">
    <property type="entry name" value="Rossmann-like_a/b/a_fold"/>
</dbReference>
<dbReference type="InterPro" id="IPR002547">
    <property type="entry name" value="tRNA-bd_dom"/>
</dbReference>
<dbReference type="InterPro" id="IPR009080">
    <property type="entry name" value="tRNAsynth_Ia_anticodon-bd"/>
</dbReference>
<dbReference type="NCBIfam" id="TIGR00398">
    <property type="entry name" value="metG"/>
    <property type="match status" value="1"/>
</dbReference>
<dbReference type="NCBIfam" id="TIGR00399">
    <property type="entry name" value="metG_C_term"/>
    <property type="match status" value="1"/>
</dbReference>
<dbReference type="NCBIfam" id="NF001100">
    <property type="entry name" value="PRK00133.1"/>
    <property type="match status" value="1"/>
</dbReference>
<dbReference type="PANTHER" id="PTHR45765">
    <property type="entry name" value="METHIONINE--TRNA LIGASE"/>
    <property type="match status" value="1"/>
</dbReference>
<dbReference type="PANTHER" id="PTHR45765:SF1">
    <property type="entry name" value="METHIONINE--TRNA LIGASE, CYTOPLASMIC"/>
    <property type="match status" value="1"/>
</dbReference>
<dbReference type="Pfam" id="PF19303">
    <property type="entry name" value="Anticodon_3"/>
    <property type="match status" value="1"/>
</dbReference>
<dbReference type="Pfam" id="PF09334">
    <property type="entry name" value="tRNA-synt_1g"/>
    <property type="match status" value="1"/>
</dbReference>
<dbReference type="Pfam" id="PF01588">
    <property type="entry name" value="tRNA_bind"/>
    <property type="match status" value="1"/>
</dbReference>
<dbReference type="PRINTS" id="PR01041">
    <property type="entry name" value="TRNASYNTHMET"/>
</dbReference>
<dbReference type="SUPFAM" id="SSF47323">
    <property type="entry name" value="Anticodon-binding domain of a subclass of class I aminoacyl-tRNA synthetases"/>
    <property type="match status" value="1"/>
</dbReference>
<dbReference type="SUPFAM" id="SSF57770">
    <property type="entry name" value="Methionyl-tRNA synthetase (MetRS), Zn-domain"/>
    <property type="match status" value="1"/>
</dbReference>
<dbReference type="SUPFAM" id="SSF50249">
    <property type="entry name" value="Nucleic acid-binding proteins"/>
    <property type="match status" value="1"/>
</dbReference>
<dbReference type="SUPFAM" id="SSF52374">
    <property type="entry name" value="Nucleotidylyl transferase"/>
    <property type="match status" value="1"/>
</dbReference>
<dbReference type="PROSITE" id="PS00178">
    <property type="entry name" value="AA_TRNA_LIGASE_I"/>
    <property type="match status" value="1"/>
</dbReference>
<dbReference type="PROSITE" id="PS50886">
    <property type="entry name" value="TRBD"/>
    <property type="match status" value="1"/>
</dbReference>
<feature type="chain" id="PRO_0000331912" description="Methionine--tRNA ligase">
    <location>
        <begin position="1"/>
        <end position="689"/>
    </location>
</feature>
<feature type="domain" description="tRNA-binding" evidence="1">
    <location>
        <begin position="588"/>
        <end position="689"/>
    </location>
</feature>
<feature type="short sequence motif" description="'HIGH' region">
    <location>
        <begin position="15"/>
        <end position="25"/>
    </location>
</feature>
<feature type="short sequence motif" description="'KMSKS' region">
    <location>
        <begin position="332"/>
        <end position="336"/>
    </location>
</feature>
<feature type="binding site" evidence="1">
    <location>
        <position position="146"/>
    </location>
    <ligand>
        <name>Zn(2+)</name>
        <dbReference type="ChEBI" id="CHEBI:29105"/>
    </ligand>
</feature>
<feature type="binding site" evidence="1">
    <location>
        <position position="149"/>
    </location>
    <ligand>
        <name>Zn(2+)</name>
        <dbReference type="ChEBI" id="CHEBI:29105"/>
    </ligand>
</feature>
<feature type="binding site" evidence="1">
    <location>
        <position position="159"/>
    </location>
    <ligand>
        <name>Zn(2+)</name>
        <dbReference type="ChEBI" id="CHEBI:29105"/>
    </ligand>
</feature>
<feature type="binding site" evidence="1">
    <location>
        <position position="162"/>
    </location>
    <ligand>
        <name>Zn(2+)</name>
        <dbReference type="ChEBI" id="CHEBI:29105"/>
    </ligand>
</feature>
<feature type="binding site" evidence="1">
    <location>
        <position position="335"/>
    </location>
    <ligand>
        <name>ATP</name>
        <dbReference type="ChEBI" id="CHEBI:30616"/>
    </ligand>
</feature>